<organism>
    <name type="scientific">Rickettsia bellii (strain RML369-C)</name>
    <dbReference type="NCBI Taxonomy" id="336407"/>
    <lineage>
        <taxon>Bacteria</taxon>
        <taxon>Pseudomonadati</taxon>
        <taxon>Pseudomonadota</taxon>
        <taxon>Alphaproteobacteria</taxon>
        <taxon>Rickettsiales</taxon>
        <taxon>Rickettsiaceae</taxon>
        <taxon>Rickettsieae</taxon>
        <taxon>Rickettsia</taxon>
        <taxon>belli group</taxon>
    </lineage>
</organism>
<sequence>MTDKLQPLRGMKDLLPDDYKVHDYIIKKAKEVGELYGYKQMSTPILEYTKVFNRSMGESSDVISKEIYSFLDKSDESVALRPEFTAGIVRAFISNGLQHKLPLKLFSTGPVFRYDRPQAGRQRQFHQLNYEYLGAKGAISDAETLKLAVDILQSLEVLADTTLELNSLGCSQSRSTYQQKLVEYLNDFKDELSEDSKIRLTKNPMRILDSKSEVDQKIVANAPVLSEYYTEESKKYFEELLKYLDILGVKYTINARLVRGLDYYCHTAFEFTTTKLGSQSTILAGGRYDGLSRIMGNNDEIPAIGFAAGIERIALMREYNIDSVTPIFVLPIGENNISHSLKIADQLRLHNIPVLIEVSGKMAKRMQRALNENAKFIVFIGDEEQANNNLKIKDLEKQEEYILDFSKTIELLKKS</sequence>
<accession>Q1RJ50</accession>
<name>SYH_RICBR</name>
<feature type="chain" id="PRO_0000274845" description="Histidine--tRNA ligase">
    <location>
        <begin position="1"/>
        <end position="415"/>
    </location>
</feature>
<dbReference type="EC" id="6.1.1.21" evidence="1"/>
<dbReference type="EMBL" id="CP000087">
    <property type="protein sequence ID" value="ABE04614.1"/>
    <property type="molecule type" value="Genomic_DNA"/>
</dbReference>
<dbReference type="RefSeq" id="WP_011477205.1">
    <property type="nucleotide sequence ID" value="NC_007940.1"/>
</dbReference>
<dbReference type="SMR" id="Q1RJ50"/>
<dbReference type="KEGG" id="rbe:RBE_0533"/>
<dbReference type="eggNOG" id="COG0124">
    <property type="taxonomic scope" value="Bacteria"/>
</dbReference>
<dbReference type="HOGENOM" id="CLU_025113_1_0_5"/>
<dbReference type="OrthoDB" id="9800814at2"/>
<dbReference type="Proteomes" id="UP000001951">
    <property type="component" value="Chromosome"/>
</dbReference>
<dbReference type="GO" id="GO:0005737">
    <property type="term" value="C:cytoplasm"/>
    <property type="evidence" value="ECO:0007669"/>
    <property type="project" value="UniProtKB-SubCell"/>
</dbReference>
<dbReference type="GO" id="GO:0005524">
    <property type="term" value="F:ATP binding"/>
    <property type="evidence" value="ECO:0007669"/>
    <property type="project" value="UniProtKB-UniRule"/>
</dbReference>
<dbReference type="GO" id="GO:0004821">
    <property type="term" value="F:histidine-tRNA ligase activity"/>
    <property type="evidence" value="ECO:0007669"/>
    <property type="project" value="UniProtKB-UniRule"/>
</dbReference>
<dbReference type="GO" id="GO:0006427">
    <property type="term" value="P:histidyl-tRNA aminoacylation"/>
    <property type="evidence" value="ECO:0007669"/>
    <property type="project" value="UniProtKB-UniRule"/>
</dbReference>
<dbReference type="CDD" id="cd00773">
    <property type="entry name" value="HisRS-like_core"/>
    <property type="match status" value="1"/>
</dbReference>
<dbReference type="CDD" id="cd00859">
    <property type="entry name" value="HisRS_anticodon"/>
    <property type="match status" value="1"/>
</dbReference>
<dbReference type="Gene3D" id="3.40.50.800">
    <property type="entry name" value="Anticodon-binding domain"/>
    <property type="match status" value="1"/>
</dbReference>
<dbReference type="Gene3D" id="3.30.930.10">
    <property type="entry name" value="Bira Bifunctional Protein, Domain 2"/>
    <property type="match status" value="1"/>
</dbReference>
<dbReference type="HAMAP" id="MF_00127">
    <property type="entry name" value="His_tRNA_synth"/>
    <property type="match status" value="1"/>
</dbReference>
<dbReference type="InterPro" id="IPR006195">
    <property type="entry name" value="aa-tRNA-synth_II"/>
</dbReference>
<dbReference type="InterPro" id="IPR045864">
    <property type="entry name" value="aa-tRNA-synth_II/BPL/LPL"/>
</dbReference>
<dbReference type="InterPro" id="IPR004154">
    <property type="entry name" value="Anticodon-bd"/>
</dbReference>
<dbReference type="InterPro" id="IPR036621">
    <property type="entry name" value="Anticodon-bd_dom_sf"/>
</dbReference>
<dbReference type="InterPro" id="IPR015807">
    <property type="entry name" value="His-tRNA-ligase"/>
</dbReference>
<dbReference type="InterPro" id="IPR041715">
    <property type="entry name" value="HisRS-like_core"/>
</dbReference>
<dbReference type="InterPro" id="IPR004516">
    <property type="entry name" value="HisRS/HisZ"/>
</dbReference>
<dbReference type="InterPro" id="IPR033656">
    <property type="entry name" value="HisRS_anticodon"/>
</dbReference>
<dbReference type="NCBIfam" id="TIGR00442">
    <property type="entry name" value="hisS"/>
    <property type="match status" value="1"/>
</dbReference>
<dbReference type="PANTHER" id="PTHR43707:SF1">
    <property type="entry name" value="HISTIDINE--TRNA LIGASE, MITOCHONDRIAL-RELATED"/>
    <property type="match status" value="1"/>
</dbReference>
<dbReference type="PANTHER" id="PTHR43707">
    <property type="entry name" value="HISTIDYL-TRNA SYNTHETASE"/>
    <property type="match status" value="1"/>
</dbReference>
<dbReference type="Pfam" id="PF03129">
    <property type="entry name" value="HGTP_anticodon"/>
    <property type="match status" value="1"/>
</dbReference>
<dbReference type="Pfam" id="PF13393">
    <property type="entry name" value="tRNA-synt_His"/>
    <property type="match status" value="1"/>
</dbReference>
<dbReference type="PIRSF" id="PIRSF001549">
    <property type="entry name" value="His-tRNA_synth"/>
    <property type="match status" value="1"/>
</dbReference>
<dbReference type="SUPFAM" id="SSF52954">
    <property type="entry name" value="Class II aaRS ABD-related"/>
    <property type="match status" value="1"/>
</dbReference>
<dbReference type="SUPFAM" id="SSF55681">
    <property type="entry name" value="Class II aaRS and biotin synthetases"/>
    <property type="match status" value="1"/>
</dbReference>
<dbReference type="PROSITE" id="PS50862">
    <property type="entry name" value="AA_TRNA_LIGASE_II"/>
    <property type="match status" value="1"/>
</dbReference>
<gene>
    <name evidence="1" type="primary">hisS</name>
    <name type="ordered locus">RBE_0533</name>
</gene>
<evidence type="ECO:0000255" key="1">
    <source>
        <dbReference type="HAMAP-Rule" id="MF_00127"/>
    </source>
</evidence>
<keyword id="KW-0030">Aminoacyl-tRNA synthetase</keyword>
<keyword id="KW-0067">ATP-binding</keyword>
<keyword id="KW-0963">Cytoplasm</keyword>
<keyword id="KW-0436">Ligase</keyword>
<keyword id="KW-0547">Nucleotide-binding</keyword>
<keyword id="KW-0648">Protein biosynthesis</keyword>
<proteinExistence type="inferred from homology"/>
<comment type="catalytic activity">
    <reaction evidence="1">
        <text>tRNA(His) + L-histidine + ATP = L-histidyl-tRNA(His) + AMP + diphosphate + H(+)</text>
        <dbReference type="Rhea" id="RHEA:17313"/>
        <dbReference type="Rhea" id="RHEA-COMP:9665"/>
        <dbReference type="Rhea" id="RHEA-COMP:9689"/>
        <dbReference type="ChEBI" id="CHEBI:15378"/>
        <dbReference type="ChEBI" id="CHEBI:30616"/>
        <dbReference type="ChEBI" id="CHEBI:33019"/>
        <dbReference type="ChEBI" id="CHEBI:57595"/>
        <dbReference type="ChEBI" id="CHEBI:78442"/>
        <dbReference type="ChEBI" id="CHEBI:78527"/>
        <dbReference type="ChEBI" id="CHEBI:456215"/>
        <dbReference type="EC" id="6.1.1.21"/>
    </reaction>
</comment>
<comment type="subunit">
    <text evidence="1">Homodimer.</text>
</comment>
<comment type="subcellular location">
    <subcellularLocation>
        <location evidence="1">Cytoplasm</location>
    </subcellularLocation>
</comment>
<comment type="similarity">
    <text evidence="1">Belongs to the class-II aminoacyl-tRNA synthetase family.</text>
</comment>
<reference key="1">
    <citation type="journal article" date="2006" name="PLoS Genet.">
        <title>Genome sequence of Rickettsia bellii illuminates the role of amoebae in gene exchanges between intracellular pathogens.</title>
        <authorList>
            <person name="Ogata H."/>
            <person name="La Scola B."/>
            <person name="Audic S."/>
            <person name="Renesto P."/>
            <person name="Blanc G."/>
            <person name="Robert C."/>
            <person name="Fournier P.-E."/>
            <person name="Claverie J.-M."/>
            <person name="Raoult D."/>
        </authorList>
    </citation>
    <scope>NUCLEOTIDE SEQUENCE [LARGE SCALE GENOMIC DNA]</scope>
    <source>
        <strain>RML369-C</strain>
    </source>
</reference>
<protein>
    <recommendedName>
        <fullName evidence="1">Histidine--tRNA ligase</fullName>
        <ecNumber evidence="1">6.1.1.21</ecNumber>
    </recommendedName>
    <alternativeName>
        <fullName evidence="1">Histidyl-tRNA synthetase</fullName>
        <shortName evidence="1">HisRS</shortName>
    </alternativeName>
</protein>